<proteinExistence type="evidence at protein level"/>
<reference key="1">
    <citation type="submission" date="2000-11" db="EMBL/GenBank/DDBJ databases">
        <title>Predominant brain expression and full-length characterization of a novel human 6.6-Kb transcript mapping at 11p14 in the telomeric part of WAGR locus.</title>
        <authorList>
            <person name="Rosier M.F."/>
            <person name="Toselli E."/>
            <person name="Segurens-Soury B."/>
            <person name="Auffray C."/>
            <person name="Devignes M.D."/>
        </authorList>
    </citation>
    <scope>NUCLEOTIDE SEQUENCE [MRNA] (ISOFORM 1)</scope>
</reference>
<reference key="2">
    <citation type="journal article" date="2004" name="Nat. Genet.">
        <title>Complete sequencing and characterization of 21,243 full-length human cDNAs.</title>
        <authorList>
            <person name="Ota T."/>
            <person name="Suzuki Y."/>
            <person name="Nishikawa T."/>
            <person name="Otsuki T."/>
            <person name="Sugiyama T."/>
            <person name="Irie R."/>
            <person name="Wakamatsu A."/>
            <person name="Hayashi K."/>
            <person name="Sato H."/>
            <person name="Nagai K."/>
            <person name="Kimura K."/>
            <person name="Makita H."/>
            <person name="Sekine M."/>
            <person name="Obayashi M."/>
            <person name="Nishi T."/>
            <person name="Shibahara T."/>
            <person name="Tanaka T."/>
            <person name="Ishii S."/>
            <person name="Yamamoto J."/>
            <person name="Saito K."/>
            <person name="Kawai Y."/>
            <person name="Isono Y."/>
            <person name="Nakamura Y."/>
            <person name="Nagahari K."/>
            <person name="Murakami K."/>
            <person name="Yasuda T."/>
            <person name="Iwayanagi T."/>
            <person name="Wagatsuma M."/>
            <person name="Shiratori A."/>
            <person name="Sudo H."/>
            <person name="Hosoiri T."/>
            <person name="Kaku Y."/>
            <person name="Kodaira H."/>
            <person name="Kondo H."/>
            <person name="Sugawara M."/>
            <person name="Takahashi M."/>
            <person name="Kanda K."/>
            <person name="Yokoi T."/>
            <person name="Furuya T."/>
            <person name="Kikkawa E."/>
            <person name="Omura Y."/>
            <person name="Abe K."/>
            <person name="Kamihara K."/>
            <person name="Katsuta N."/>
            <person name="Sato K."/>
            <person name="Tanikawa M."/>
            <person name="Yamazaki M."/>
            <person name="Ninomiya K."/>
            <person name="Ishibashi T."/>
            <person name="Yamashita H."/>
            <person name="Murakawa K."/>
            <person name="Fujimori K."/>
            <person name="Tanai H."/>
            <person name="Kimata M."/>
            <person name="Watanabe M."/>
            <person name="Hiraoka S."/>
            <person name="Chiba Y."/>
            <person name="Ishida S."/>
            <person name="Ono Y."/>
            <person name="Takiguchi S."/>
            <person name="Watanabe S."/>
            <person name="Yosida M."/>
            <person name="Hotuta T."/>
            <person name="Kusano J."/>
            <person name="Kanehori K."/>
            <person name="Takahashi-Fujii A."/>
            <person name="Hara H."/>
            <person name="Tanase T.-O."/>
            <person name="Nomura Y."/>
            <person name="Togiya S."/>
            <person name="Komai F."/>
            <person name="Hara R."/>
            <person name="Takeuchi K."/>
            <person name="Arita M."/>
            <person name="Imose N."/>
            <person name="Musashino K."/>
            <person name="Yuuki H."/>
            <person name="Oshima A."/>
            <person name="Sasaki N."/>
            <person name="Aotsuka S."/>
            <person name="Yoshikawa Y."/>
            <person name="Matsunawa H."/>
            <person name="Ichihara T."/>
            <person name="Shiohata N."/>
            <person name="Sano S."/>
            <person name="Moriya S."/>
            <person name="Momiyama H."/>
            <person name="Satoh N."/>
            <person name="Takami S."/>
            <person name="Terashima Y."/>
            <person name="Suzuki O."/>
            <person name="Nakagawa S."/>
            <person name="Senoh A."/>
            <person name="Mizoguchi H."/>
            <person name="Goto Y."/>
            <person name="Shimizu F."/>
            <person name="Wakebe H."/>
            <person name="Hishigaki H."/>
            <person name="Watanabe T."/>
            <person name="Sugiyama A."/>
            <person name="Takemoto M."/>
            <person name="Kawakami B."/>
            <person name="Yamazaki M."/>
            <person name="Watanabe K."/>
            <person name="Kumagai A."/>
            <person name="Itakura S."/>
            <person name="Fukuzumi Y."/>
            <person name="Fujimori Y."/>
            <person name="Komiyama M."/>
            <person name="Tashiro H."/>
            <person name="Tanigami A."/>
            <person name="Fujiwara T."/>
            <person name="Ono T."/>
            <person name="Yamada K."/>
            <person name="Fujii Y."/>
            <person name="Ozaki K."/>
            <person name="Hirao M."/>
            <person name="Ohmori Y."/>
            <person name="Kawabata A."/>
            <person name="Hikiji T."/>
            <person name="Kobatake N."/>
            <person name="Inagaki H."/>
            <person name="Ikema Y."/>
            <person name="Okamoto S."/>
            <person name="Okitani R."/>
            <person name="Kawakami T."/>
            <person name="Noguchi S."/>
            <person name="Itoh T."/>
            <person name="Shigeta K."/>
            <person name="Senba T."/>
            <person name="Matsumura K."/>
            <person name="Nakajima Y."/>
            <person name="Mizuno T."/>
            <person name="Morinaga M."/>
            <person name="Sasaki M."/>
            <person name="Togashi T."/>
            <person name="Oyama M."/>
            <person name="Hata H."/>
            <person name="Watanabe M."/>
            <person name="Komatsu T."/>
            <person name="Mizushima-Sugano J."/>
            <person name="Satoh T."/>
            <person name="Shirai Y."/>
            <person name="Takahashi Y."/>
            <person name="Nakagawa K."/>
            <person name="Okumura K."/>
            <person name="Nagase T."/>
            <person name="Nomura N."/>
            <person name="Kikuchi H."/>
            <person name="Masuho Y."/>
            <person name="Yamashita R."/>
            <person name="Nakai K."/>
            <person name="Yada T."/>
            <person name="Nakamura Y."/>
            <person name="Ohara O."/>
            <person name="Isogai T."/>
            <person name="Sugano S."/>
        </authorList>
    </citation>
    <scope>NUCLEOTIDE SEQUENCE [LARGE SCALE MRNA] (ISOFORM 2)</scope>
    <source>
        <tissue>Hippocampus</tissue>
    </source>
</reference>
<reference key="3">
    <citation type="journal article" date="2006" name="Nature">
        <title>Human chromosome 11 DNA sequence and analysis including novel gene identification.</title>
        <authorList>
            <person name="Taylor T.D."/>
            <person name="Noguchi H."/>
            <person name="Totoki Y."/>
            <person name="Toyoda A."/>
            <person name="Kuroki Y."/>
            <person name="Dewar K."/>
            <person name="Lloyd C."/>
            <person name="Itoh T."/>
            <person name="Takeda T."/>
            <person name="Kim D.-W."/>
            <person name="She X."/>
            <person name="Barlow K.F."/>
            <person name="Bloom T."/>
            <person name="Bruford E."/>
            <person name="Chang J.L."/>
            <person name="Cuomo C.A."/>
            <person name="Eichler E."/>
            <person name="FitzGerald M.G."/>
            <person name="Jaffe D.B."/>
            <person name="LaButti K."/>
            <person name="Nicol R."/>
            <person name="Park H.-S."/>
            <person name="Seaman C."/>
            <person name="Sougnez C."/>
            <person name="Yang X."/>
            <person name="Zimmer A.R."/>
            <person name="Zody M.C."/>
            <person name="Birren B.W."/>
            <person name="Nusbaum C."/>
            <person name="Fujiyama A."/>
            <person name="Hattori M."/>
            <person name="Rogers J."/>
            <person name="Lander E.S."/>
            <person name="Sakaki Y."/>
        </authorList>
    </citation>
    <scope>NUCLEOTIDE SEQUENCE [LARGE SCALE GENOMIC DNA]</scope>
</reference>
<reference key="4">
    <citation type="journal article" date="2011" name="Acta Pharmacol. Sin.">
        <title>Physiological roles and diseases of Tmem16/Anoctamin proteins: are they all chloride channels?</title>
        <authorList>
            <person name="Duran C."/>
            <person name="Hartzell H.C."/>
        </authorList>
    </citation>
    <scope>REVIEW</scope>
</reference>
<reference key="5">
    <citation type="journal article" date="2011" name="Pflugers Arch.">
        <title>Anoctamins.</title>
        <authorList>
            <person name="Kunzelmann K."/>
            <person name="Tian Y."/>
            <person name="Martins J.R."/>
            <person name="Faria D."/>
            <person name="Kongsuphol P."/>
            <person name="Ousingsawat J."/>
            <person name="Thevenod F."/>
            <person name="Roussa E."/>
            <person name="Rock J."/>
            <person name="Schreiber R."/>
        </authorList>
    </citation>
    <scope>REVIEW</scope>
</reference>
<reference key="6">
    <citation type="journal article" date="2012" name="Am. J. Hum. Genet.">
        <title>Mutations in ANO3 cause dominant craniocervical dystonia: ion channel implicated in pathogenesis.</title>
        <authorList>
            <person name="Charlesworth G."/>
            <person name="Plagnol V."/>
            <person name="Holmstroem K.M."/>
            <person name="Bras J."/>
            <person name="Sheerin U.M."/>
            <person name="Preza E."/>
            <person name="Rubio-Agusti I."/>
            <person name="Ryten M."/>
            <person name="Schneider S.A."/>
            <person name="Stamelou M."/>
            <person name="Trabzuni D."/>
            <person name="Abramov A.Y."/>
            <person name="Bhatia K.P."/>
            <person name="Wood N.W."/>
        </authorList>
    </citation>
    <scope>TISSUE SPECIFICITY</scope>
    <scope>VARIANTS DYT24 CYS-490; TRP-494; GLY-685 AND ASN-862</scope>
</reference>
<reference key="7">
    <citation type="journal article" date="2012" name="Exp. Physiol.">
        <title>The anoctamin (TMEM16) gene family: calcium-activated chloride channels come of age.</title>
        <authorList>
            <person name="Winpenny J.P."/>
            <person name="Gray M.A."/>
        </authorList>
    </citation>
    <scope>REVIEW</scope>
</reference>
<reference key="8">
    <citation type="journal article" date="2012" name="Exp. Physiol.">
        <title>The anoctamin family: TMEM16A and TMEM16B as calcium-activated chloride channels.</title>
        <authorList>
            <person name="Scudieri P."/>
            <person name="Sondo E."/>
            <person name="Ferrera L."/>
            <person name="Galietta L.J."/>
        </authorList>
    </citation>
    <scope>REVIEW</scope>
    <scope>ABSENCE OF CALCIUM-ACTIVATED CHLORIDE CHANNEL ACTIVITY</scope>
</reference>
<comment type="function">
    <text evidence="2 7">Has calcium-dependent phospholipid scramblase activity; scrambles phosphatidylcholine and galactosylceramide (By similarity). Seems to act as potassium channel regulator and may inhibit pain signaling; can facilitate KCNT1/Slack channel activity by promoting its full single-channel conductance at very low sodium concentrations and by increasing its sodium sensitivity (By similarity). Does not exhibit calcium-activated chloride channel (CaCC) activity (PubMed:21984732).</text>
</comment>
<comment type="catalytic activity">
    <reaction evidence="2">
        <text>a 1,2-diacyl-sn-glycero-3-phosphocholine(in) = a 1,2-diacyl-sn-glycero-3-phosphocholine(out)</text>
        <dbReference type="Rhea" id="RHEA:38571"/>
        <dbReference type="ChEBI" id="CHEBI:57643"/>
    </reaction>
    <physiologicalReaction direction="right-to-left" evidence="2">
        <dbReference type="Rhea" id="RHEA:38573"/>
    </physiologicalReaction>
</comment>
<comment type="catalytic activity">
    <reaction evidence="2">
        <text>a beta-D-galactosyl-(1&lt;-&gt;1')-N-acylsphing-4-enine(out) = a beta-D-galactosyl-(1&lt;-&gt;1')-N-acylsphing-4-enine(in)</text>
        <dbReference type="Rhea" id="RHEA:38899"/>
        <dbReference type="ChEBI" id="CHEBI:18390"/>
    </reaction>
    <physiologicalReaction direction="left-to-right" evidence="2">
        <dbReference type="Rhea" id="RHEA:38900"/>
    </physiologicalReaction>
</comment>
<comment type="subunit">
    <text evidence="2">Interacts with KCNT1/Slack.</text>
</comment>
<comment type="subcellular location">
    <subcellularLocation>
        <location evidence="8">Cell membrane</location>
        <topology evidence="8">Multi-pass membrane protein</topology>
    </subcellularLocation>
    <text evidence="1">Shows an intracellular localization.</text>
</comment>
<comment type="alternative products">
    <event type="alternative splicing"/>
    <isoform>
        <id>Q9BYT9-1</id>
        <name>1</name>
        <sequence type="displayed"/>
    </isoform>
    <isoform>
        <id>Q9BYT9-2</id>
        <name>2</name>
        <sequence type="described" ref="VSP_056893"/>
    </isoform>
</comment>
<comment type="tissue specificity">
    <text evidence="5">Highly expressed in the forebrain striatum.</text>
</comment>
<comment type="disease" evidence="5">
    <disease id="DI-03682">
        <name>Dystonia 24</name>
        <acronym>DYT24</acronym>
        <description>A form of dystonia, a disorder defined by the presence of sustained involuntary muscle contraction, often leading to abnormal postures. DYT24 is an autosomal dominant focal dystonia affecting the neck, laryngeal muscles, and muscles of the upper limbs.</description>
        <dbReference type="MIM" id="615034"/>
    </disease>
    <text>The disease is caused by variants affecting the gene represented in this entry.</text>
</comment>
<comment type="miscellaneous">
    <text>The term 'anoctamin' was coined because these channels are anion selective and have eight (OCT) transmembrane segments. There is some dissatisfaction in the field with the Ano nomenclature because it is not certain that all the members of this family are anion channels or have the 8-transmembrane topology.</text>
</comment>
<comment type="similarity">
    <text evidence="8">Belongs to the anoctamin family.</text>
</comment>
<sequence length="981" mass="114657">MVHHSGSIQSFKQQKGMNISKSEITKETSLKPSRRSLPCLAQSYAYSKSLSQSTSLFQSTESESQAPTSITLISTDKAEQVNTEENKNDSVLRCSFADLSDFCLALGKDKDYTDESEHATYDRSRLINDFVIKDKSEFKTKLSKNDMNYIASSGPLFKDGKKRIDYILVYRKTNIQYDKRNTFEKNLRAEGLMLEKEPAIASPDIMFIKIHIPWDTLCKYAERLNIRMPFRKKCYYTDGRSKSMGRMQTYFRRIKNWMAQNPMVLDKSAFPDLEESDCYTGPFSRARIHHFIINNKDTFFSNATRSRIVYHMLERTKYENGISKVGIRKLINNGSYIAAFPPHEGAYKSSQPIKTHGPQNNRHLLYERWARWGMWYKHQPLDLIRLYFGEKIGLYFAWLGWYTGMLIPAAIVGLCVFFYGLFTMNNSQVSQEICKATEVFMCPLCDKNCSLQRLNDSCIYAKVTYLFDNGGTVFFAIFMAIWATVFLEFWKRRRSILTYTWDLIEWEEEEETLRPQFEAKYYKMEIVNPITGKPEPHQPSSDKVTRLLVSVSGIFFMISLVITAVFGVVVYRLVVMEQFASFKWNFIKQYWQFATSAAAVCINFIIIMLLNLAYEKIAYLLTNLEYPRTESEWENSFALKMFLFQFVNLNSSIFYIAFFLGRFVGHPGKYNKLFDRWRLEECHPSGCLIDLCLQMGVIMFLKQIWNNFMELGYPLIQNWWSRHKIKRGIHDASIPQWENDWNLQPMNLHGLMDEYLEMVLQFGFTTIFVAAFPLAPLLALLNNIIEIRLDAYKFVTQWRRPLPARATDIGIWLGILEGIGILAVITNAFVIAITSDYIPRFVYEYKYGPCANHVEPSENCLKGYVNNSLSFFDLSELGMGKSGYCRYRDYRGPPWSSKPYEFTLQYWHILAARLAFIIVFEHLVFGIKSFIAYLIPDVPKGLHDRIRREKYLVQEMMYEAELEHLQQQRRKSGQPVHHEWP</sequence>
<organism>
    <name type="scientific">Homo sapiens</name>
    <name type="common">Human</name>
    <dbReference type="NCBI Taxonomy" id="9606"/>
    <lineage>
        <taxon>Eukaryota</taxon>
        <taxon>Metazoa</taxon>
        <taxon>Chordata</taxon>
        <taxon>Craniata</taxon>
        <taxon>Vertebrata</taxon>
        <taxon>Euteleostomi</taxon>
        <taxon>Mammalia</taxon>
        <taxon>Eutheria</taxon>
        <taxon>Euarchontoglires</taxon>
        <taxon>Primates</taxon>
        <taxon>Haplorrhini</taxon>
        <taxon>Catarrhini</taxon>
        <taxon>Hominidae</taxon>
        <taxon>Homo</taxon>
    </lineage>
</organism>
<dbReference type="EMBL" id="AJ300461">
    <property type="protein sequence ID" value="CAC32454.1"/>
    <property type="molecule type" value="mRNA"/>
</dbReference>
<dbReference type="EMBL" id="AK295816">
    <property type="protein sequence ID" value="BAH12191.1"/>
    <property type="molecule type" value="mRNA"/>
</dbReference>
<dbReference type="EMBL" id="AC021698">
    <property type="status" value="NOT_ANNOTATED_CDS"/>
    <property type="molecule type" value="Genomic_DNA"/>
</dbReference>
<dbReference type="EMBL" id="AC036114">
    <property type="status" value="NOT_ANNOTATED_CDS"/>
    <property type="molecule type" value="Genomic_DNA"/>
</dbReference>
<dbReference type="EMBL" id="AC079064">
    <property type="status" value="NOT_ANNOTATED_CDS"/>
    <property type="molecule type" value="Genomic_DNA"/>
</dbReference>
<dbReference type="EMBL" id="AC083755">
    <property type="status" value="NOT_ANNOTATED_CDS"/>
    <property type="molecule type" value="Genomic_DNA"/>
</dbReference>
<dbReference type="EMBL" id="AC099687">
    <property type="status" value="NOT_ANNOTATED_CDS"/>
    <property type="molecule type" value="Genomic_DNA"/>
</dbReference>
<dbReference type="CCDS" id="CCDS31447.1">
    <molecule id="Q9BYT9-1"/>
</dbReference>
<dbReference type="CCDS" id="CCDS81557.1">
    <molecule id="Q9BYT9-2"/>
</dbReference>
<dbReference type="RefSeq" id="NP_001300655.1">
    <property type="nucleotide sequence ID" value="NM_001313726.1"/>
</dbReference>
<dbReference type="RefSeq" id="NP_001300656.1">
    <molecule id="Q9BYT9-2"/>
    <property type="nucleotide sequence ID" value="NM_001313727.2"/>
</dbReference>
<dbReference type="RefSeq" id="NP_113606.2">
    <molecule id="Q9BYT9-1"/>
    <property type="nucleotide sequence ID" value="NM_031418.4"/>
</dbReference>
<dbReference type="RefSeq" id="XP_016873607.1">
    <molecule id="Q9BYT9-2"/>
    <property type="nucleotide sequence ID" value="XM_017018118.3"/>
</dbReference>
<dbReference type="RefSeq" id="XP_054225598.1">
    <molecule id="Q9BYT9-2"/>
    <property type="nucleotide sequence ID" value="XM_054369623.1"/>
</dbReference>
<dbReference type="SMR" id="Q9BYT9"/>
<dbReference type="BioGRID" id="122027">
    <property type="interactions" value="12"/>
</dbReference>
<dbReference type="FunCoup" id="Q9BYT9">
    <property type="interactions" value="561"/>
</dbReference>
<dbReference type="IntAct" id="Q9BYT9">
    <property type="interactions" value="8"/>
</dbReference>
<dbReference type="STRING" id="9606.ENSP00000256737"/>
<dbReference type="TCDB" id="1.A.17.1.20">
    <property type="family name" value="the calcium-dependent chloride channel (ca-clc) family"/>
</dbReference>
<dbReference type="GlyCosmos" id="Q9BYT9">
    <property type="glycosylation" value="4 sites, No reported glycans"/>
</dbReference>
<dbReference type="GlyGen" id="Q9BYT9">
    <property type="glycosylation" value="4 sites"/>
</dbReference>
<dbReference type="iPTMnet" id="Q9BYT9"/>
<dbReference type="PhosphoSitePlus" id="Q9BYT9"/>
<dbReference type="BioMuta" id="ANO3"/>
<dbReference type="DMDM" id="296434396"/>
<dbReference type="MassIVE" id="Q9BYT9"/>
<dbReference type="PaxDb" id="9606-ENSP00000256737"/>
<dbReference type="PeptideAtlas" id="Q9BYT9"/>
<dbReference type="ProteomicsDB" id="6516"/>
<dbReference type="ProteomicsDB" id="79708">
    <molecule id="Q9BYT9-1"/>
</dbReference>
<dbReference type="Antibodypedia" id="25359">
    <property type="antibodies" value="109 antibodies from 25 providers"/>
</dbReference>
<dbReference type="DNASU" id="63982"/>
<dbReference type="Ensembl" id="ENST00000256737.8">
    <molecule id="Q9BYT9-1"/>
    <property type="protein sequence ID" value="ENSP00000256737.3"/>
    <property type="gene ID" value="ENSG00000134343.14"/>
</dbReference>
<dbReference type="Ensembl" id="ENST00000531568.1">
    <molecule id="Q9BYT9-2"/>
    <property type="protein sequence ID" value="ENSP00000432394.1"/>
    <property type="gene ID" value="ENSG00000134343.14"/>
</dbReference>
<dbReference type="GeneID" id="63982"/>
<dbReference type="KEGG" id="hsa:63982"/>
<dbReference type="MANE-Select" id="ENST00000256737.8">
    <property type="protein sequence ID" value="ENSP00000256737.3"/>
    <property type="RefSeq nucleotide sequence ID" value="NM_031418.4"/>
    <property type="RefSeq protein sequence ID" value="NP_113606.2"/>
</dbReference>
<dbReference type="UCSC" id="uc001mqt.5">
    <molecule id="Q9BYT9-1"/>
    <property type="organism name" value="human"/>
</dbReference>
<dbReference type="AGR" id="HGNC:14004"/>
<dbReference type="CTD" id="63982"/>
<dbReference type="DisGeNET" id="63982"/>
<dbReference type="GeneCards" id="ANO3"/>
<dbReference type="HGNC" id="HGNC:14004">
    <property type="gene designation" value="ANO3"/>
</dbReference>
<dbReference type="HPA" id="ENSG00000134343">
    <property type="expression patterns" value="Group enriched (brain, epididymis)"/>
</dbReference>
<dbReference type="MalaCards" id="ANO3"/>
<dbReference type="MIM" id="610110">
    <property type="type" value="gene"/>
</dbReference>
<dbReference type="MIM" id="615034">
    <property type="type" value="phenotype"/>
</dbReference>
<dbReference type="neXtProt" id="NX_Q9BYT9"/>
<dbReference type="OpenTargets" id="ENSG00000134343"/>
<dbReference type="Orphanet" id="420485">
    <property type="disease" value="Cranio-cervical dystonia with laryngeal and upper-limb involvement"/>
</dbReference>
<dbReference type="PharmGKB" id="PA25489"/>
<dbReference type="VEuPathDB" id="HostDB:ENSG00000134343"/>
<dbReference type="eggNOG" id="KOG2514">
    <property type="taxonomic scope" value="Eukaryota"/>
</dbReference>
<dbReference type="GeneTree" id="ENSGT00940000156257"/>
<dbReference type="HOGENOM" id="CLU_006685_1_3_1"/>
<dbReference type="InParanoid" id="Q9BYT9"/>
<dbReference type="OMA" id="TMGRNMR"/>
<dbReference type="OrthoDB" id="296386at2759"/>
<dbReference type="PAN-GO" id="Q9BYT9">
    <property type="GO annotations" value="3 GO annotations based on evolutionary models"/>
</dbReference>
<dbReference type="PhylomeDB" id="Q9BYT9"/>
<dbReference type="TreeFam" id="TF314265"/>
<dbReference type="PathwayCommons" id="Q9BYT9"/>
<dbReference type="Reactome" id="R-HSA-2672351">
    <property type="pathway name" value="Stimuli-sensing channels"/>
</dbReference>
<dbReference type="Reactome" id="R-HSA-9733458">
    <property type="pathway name" value="Induction of Cell-Cell Fusion"/>
</dbReference>
<dbReference type="SignaLink" id="Q9BYT9"/>
<dbReference type="BioGRID-ORCS" id="63982">
    <property type="hits" value="21 hits in 1148 CRISPR screens"/>
</dbReference>
<dbReference type="ChiTaRS" id="ANO3">
    <property type="organism name" value="human"/>
</dbReference>
<dbReference type="GenomeRNAi" id="63982"/>
<dbReference type="Pharos" id="Q9BYT9">
    <property type="development level" value="Tbio"/>
</dbReference>
<dbReference type="PRO" id="PR:Q9BYT9"/>
<dbReference type="Proteomes" id="UP000005640">
    <property type="component" value="Chromosome 11"/>
</dbReference>
<dbReference type="RNAct" id="Q9BYT9">
    <property type="molecule type" value="protein"/>
</dbReference>
<dbReference type="Bgee" id="ENSG00000134343">
    <property type="expression patterns" value="Expressed in corpus epididymis and 133 other cell types or tissues"/>
</dbReference>
<dbReference type="ExpressionAtlas" id="Q9BYT9">
    <property type="expression patterns" value="baseline and differential"/>
</dbReference>
<dbReference type="GO" id="GO:0005886">
    <property type="term" value="C:plasma membrane"/>
    <property type="evidence" value="ECO:0000318"/>
    <property type="project" value="GO_Central"/>
</dbReference>
<dbReference type="GO" id="GO:0005254">
    <property type="term" value="F:chloride channel activity"/>
    <property type="evidence" value="ECO:0000318"/>
    <property type="project" value="GO_Central"/>
</dbReference>
<dbReference type="GO" id="GO:0017128">
    <property type="term" value="F:phospholipid scramblase activity"/>
    <property type="evidence" value="ECO:0007669"/>
    <property type="project" value="Ensembl"/>
</dbReference>
<dbReference type="GO" id="GO:0046983">
    <property type="term" value="F:protein dimerization activity"/>
    <property type="evidence" value="ECO:0007669"/>
    <property type="project" value="InterPro"/>
</dbReference>
<dbReference type="GO" id="GO:0061591">
    <property type="term" value="P:calcium activated galactosylceramide scrambling"/>
    <property type="evidence" value="ECO:0007669"/>
    <property type="project" value="Ensembl"/>
</dbReference>
<dbReference type="GO" id="GO:0061590">
    <property type="term" value="P:calcium activated phosphatidylcholine scrambling"/>
    <property type="evidence" value="ECO:0007669"/>
    <property type="project" value="Ensembl"/>
</dbReference>
<dbReference type="GO" id="GO:1902476">
    <property type="term" value="P:chloride transmembrane transport"/>
    <property type="evidence" value="ECO:0000318"/>
    <property type="project" value="GO_Central"/>
</dbReference>
<dbReference type="GO" id="GO:0050982">
    <property type="term" value="P:detection of mechanical stimulus"/>
    <property type="evidence" value="ECO:0007669"/>
    <property type="project" value="Ensembl"/>
</dbReference>
<dbReference type="GO" id="GO:0016048">
    <property type="term" value="P:detection of temperature stimulus"/>
    <property type="evidence" value="ECO:0007669"/>
    <property type="project" value="Ensembl"/>
</dbReference>
<dbReference type="GO" id="GO:0051649">
    <property type="term" value="P:establishment of localization in cell"/>
    <property type="evidence" value="ECO:0007669"/>
    <property type="project" value="Ensembl"/>
</dbReference>
<dbReference type="GO" id="GO:0034220">
    <property type="term" value="P:monoatomic ion transmembrane transport"/>
    <property type="evidence" value="ECO:0000304"/>
    <property type="project" value="Reactome"/>
</dbReference>
<dbReference type="InterPro" id="IPR032394">
    <property type="entry name" value="Anoct_dimer"/>
</dbReference>
<dbReference type="InterPro" id="IPR007632">
    <property type="entry name" value="Anoctamin"/>
</dbReference>
<dbReference type="InterPro" id="IPR049452">
    <property type="entry name" value="Anoctamin_TM"/>
</dbReference>
<dbReference type="PANTHER" id="PTHR12308">
    <property type="entry name" value="ANOCTAMIN"/>
    <property type="match status" value="1"/>
</dbReference>
<dbReference type="PANTHER" id="PTHR12308:SF16">
    <property type="entry name" value="ANOCTAMIN-3"/>
    <property type="match status" value="1"/>
</dbReference>
<dbReference type="Pfam" id="PF16178">
    <property type="entry name" value="Anoct_dimer"/>
    <property type="match status" value="1"/>
</dbReference>
<dbReference type="Pfam" id="PF04547">
    <property type="entry name" value="Anoctamin"/>
    <property type="match status" value="1"/>
</dbReference>
<feature type="chain" id="PRO_0000072565" description="Anoctamin-3">
    <location>
        <begin position="1"/>
        <end position="981"/>
    </location>
</feature>
<feature type="topological domain" description="Cytoplasmic" evidence="3">
    <location>
        <begin position="1"/>
        <end position="403"/>
    </location>
</feature>
<feature type="transmembrane region" description="Helical" evidence="3">
    <location>
        <begin position="404"/>
        <end position="424"/>
    </location>
</feature>
<feature type="topological domain" description="Extracellular" evidence="3">
    <location>
        <begin position="425"/>
        <end position="469"/>
    </location>
</feature>
<feature type="transmembrane region" description="Helical" evidence="3">
    <location>
        <begin position="470"/>
        <end position="490"/>
    </location>
</feature>
<feature type="topological domain" description="Cytoplasmic" evidence="3">
    <location>
        <begin position="491"/>
        <end position="550"/>
    </location>
</feature>
<feature type="transmembrane region" description="Helical" evidence="3">
    <location>
        <begin position="551"/>
        <end position="571"/>
    </location>
</feature>
<feature type="topological domain" description="Extracellular" evidence="3">
    <location>
        <begin position="572"/>
        <end position="592"/>
    </location>
</feature>
<feature type="transmembrane region" description="Helical" evidence="3">
    <location>
        <begin position="593"/>
        <end position="613"/>
    </location>
</feature>
<feature type="topological domain" description="Cytoplasmic" evidence="3">
    <location>
        <begin position="614"/>
        <end position="640"/>
    </location>
</feature>
<feature type="transmembrane region" description="Helical" evidence="3">
    <location>
        <begin position="641"/>
        <end position="661"/>
    </location>
</feature>
<feature type="topological domain" description="Extracellular" evidence="3">
    <location>
        <begin position="662"/>
        <end position="761"/>
    </location>
</feature>
<feature type="transmembrane region" description="Helical" evidence="3">
    <location>
        <begin position="762"/>
        <end position="782"/>
    </location>
</feature>
<feature type="topological domain" description="Cytoplasmic" evidence="3">
    <location>
        <begin position="783"/>
        <end position="810"/>
    </location>
</feature>
<feature type="transmembrane region" description="Helical" evidence="3">
    <location>
        <begin position="811"/>
        <end position="831"/>
    </location>
</feature>
<feature type="topological domain" description="Extracellular" evidence="3">
    <location>
        <begin position="832"/>
        <end position="914"/>
    </location>
</feature>
<feature type="transmembrane region" description="Helical" evidence="3">
    <location>
        <begin position="915"/>
        <end position="935"/>
    </location>
</feature>
<feature type="topological domain" description="Cytoplasmic" evidence="3">
    <location>
        <begin position="936"/>
        <end position="981"/>
    </location>
</feature>
<feature type="region of interest" description="Disordered" evidence="4">
    <location>
        <begin position="1"/>
        <end position="33"/>
    </location>
</feature>
<feature type="compositionally biased region" description="Polar residues" evidence="4">
    <location>
        <begin position="1"/>
        <end position="22"/>
    </location>
</feature>
<feature type="glycosylation site" description="N-linked (GlcNAc...) asparagine" evidence="3">
    <location>
        <position position="425"/>
    </location>
</feature>
<feature type="glycosylation site" description="N-linked (GlcNAc...) asparagine" evidence="3">
    <location>
        <position position="448"/>
    </location>
</feature>
<feature type="glycosylation site" description="N-linked (GlcNAc...) asparagine" evidence="3">
    <location>
        <position position="455"/>
    </location>
</feature>
<feature type="glycosylation site" description="N-linked (GlcNAc...) asparagine" evidence="3">
    <location>
        <position position="866"/>
    </location>
</feature>
<feature type="splice variant" id="VSP_056893" description="In isoform 2." evidence="6">
    <location>
        <begin position="1"/>
        <end position="146"/>
    </location>
</feature>
<feature type="sequence variant" id="VAR_069732" description="In DYT24; dbSNP:rs1565132917." evidence="5">
    <original>W</original>
    <variation>C</variation>
    <location>
        <position position="490"/>
    </location>
</feature>
<feature type="sequence variant" id="VAR_069733" description="In DYT24; dbSNP:rs587776922." evidence="5">
    <original>R</original>
    <variation>W</variation>
    <location>
        <position position="494"/>
    </location>
</feature>
<feature type="sequence variant" id="VAR_069734" description="In DYT24; dbSNP:rs587776923." evidence="5">
    <original>S</original>
    <variation>G</variation>
    <location>
        <position position="685"/>
    </location>
</feature>
<feature type="sequence variant" id="VAR_057287" description="In dbSNP:rs11825056.">
    <original>L</original>
    <variation>V</variation>
    <location>
        <position position="781"/>
    </location>
</feature>
<feature type="sequence variant" id="VAR_069735" description="In DYT24; dbSNP:rs1277790116." evidence="5">
    <original>K</original>
    <variation>N</variation>
    <location>
        <position position="862"/>
    </location>
</feature>
<feature type="sequence conflict" description="In Ref. 1; CAC32454." evidence="8" ref="1">
    <original>K</original>
    <variation>R</variation>
    <location>
        <position position="162"/>
    </location>
</feature>
<feature type="sequence conflict" description="In Ref. 1; CAC32454." evidence="8" ref="1">
    <original>Q</original>
    <variation>P</variation>
    <location>
        <position position="176"/>
    </location>
</feature>
<feature type="sequence conflict" description="In Ref. 1; CAC32454." evidence="8" ref="1">
    <original>N</original>
    <variation>D</variation>
    <location>
        <position position="256"/>
    </location>
</feature>
<name>ANO3_HUMAN</name>
<protein>
    <recommendedName>
        <fullName>Anoctamin-3</fullName>
    </recommendedName>
    <alternativeName>
        <fullName>Transmembrane protein 16C</fullName>
    </alternativeName>
</protein>
<accession>Q9BYT9</accession>
<accession>B7Z3F5</accession>
<evidence type="ECO:0000250" key="1"/>
<evidence type="ECO:0000250" key="2">
    <source>
        <dbReference type="UniProtKB" id="A2AHL1"/>
    </source>
</evidence>
<evidence type="ECO:0000255" key="3"/>
<evidence type="ECO:0000256" key="4">
    <source>
        <dbReference type="SAM" id="MobiDB-lite"/>
    </source>
</evidence>
<evidence type="ECO:0000269" key="5">
    <source>
    </source>
</evidence>
<evidence type="ECO:0000303" key="6">
    <source>
    </source>
</evidence>
<evidence type="ECO:0000303" key="7">
    <source>
    </source>
</evidence>
<evidence type="ECO:0000305" key="8"/>
<gene>
    <name type="primary">ANO3</name>
    <name type="synonym">C11orf25</name>
    <name type="synonym">TMEM16C</name>
    <name type="ORF">GENX-3947</name>
</gene>
<keyword id="KW-0025">Alternative splicing</keyword>
<keyword id="KW-1003">Cell membrane</keyword>
<keyword id="KW-0225">Disease variant</keyword>
<keyword id="KW-1023">Dystonia</keyword>
<keyword id="KW-0325">Glycoprotein</keyword>
<keyword id="KW-0445">Lipid transport</keyword>
<keyword id="KW-0472">Membrane</keyword>
<keyword id="KW-1267">Proteomics identification</keyword>
<keyword id="KW-1185">Reference proteome</keyword>
<keyword id="KW-0812">Transmembrane</keyword>
<keyword id="KW-1133">Transmembrane helix</keyword>
<keyword id="KW-0813">Transport</keyword>